<dbReference type="EC" id="1.2.1.79"/>
<dbReference type="EMBL" id="CP000325">
    <property type="protein sequence ID" value="ABL05408.1"/>
    <property type="molecule type" value="Genomic_DNA"/>
</dbReference>
<dbReference type="RefSeq" id="WP_011741019.1">
    <property type="nucleotide sequence ID" value="NC_008611.1"/>
</dbReference>
<dbReference type="SMR" id="A0PST9"/>
<dbReference type="KEGG" id="mul:MUL_3190"/>
<dbReference type="eggNOG" id="COG1012">
    <property type="taxonomic scope" value="Bacteria"/>
</dbReference>
<dbReference type="HOGENOM" id="CLU_005391_1_0_11"/>
<dbReference type="Proteomes" id="UP000000765">
    <property type="component" value="Chromosome"/>
</dbReference>
<dbReference type="GO" id="GO:0036243">
    <property type="term" value="F:succinate-semialdehyde dehydrogenase (NADP+) activity"/>
    <property type="evidence" value="ECO:0007669"/>
    <property type="project" value="UniProtKB-EC"/>
</dbReference>
<dbReference type="CDD" id="cd07101">
    <property type="entry name" value="ALDH_SSADH2_GabD2"/>
    <property type="match status" value="1"/>
</dbReference>
<dbReference type="FunFam" id="3.40.309.10:FF:000009">
    <property type="entry name" value="Aldehyde dehydrogenase A"/>
    <property type="match status" value="1"/>
</dbReference>
<dbReference type="FunFam" id="3.40.605.10:FF:000010">
    <property type="entry name" value="N-succinylglutamate 5-semialdehyde dehydrogenase"/>
    <property type="match status" value="1"/>
</dbReference>
<dbReference type="Gene3D" id="3.40.605.10">
    <property type="entry name" value="Aldehyde Dehydrogenase, Chain A, domain 1"/>
    <property type="match status" value="1"/>
</dbReference>
<dbReference type="Gene3D" id="3.40.309.10">
    <property type="entry name" value="Aldehyde Dehydrogenase, Chain A, domain 2"/>
    <property type="match status" value="1"/>
</dbReference>
<dbReference type="InterPro" id="IPR016161">
    <property type="entry name" value="Ald_DH/histidinol_DH"/>
</dbReference>
<dbReference type="InterPro" id="IPR016163">
    <property type="entry name" value="Ald_DH_C"/>
</dbReference>
<dbReference type="InterPro" id="IPR029510">
    <property type="entry name" value="Ald_DH_CS_GLU"/>
</dbReference>
<dbReference type="InterPro" id="IPR016162">
    <property type="entry name" value="Ald_DH_N"/>
</dbReference>
<dbReference type="InterPro" id="IPR015590">
    <property type="entry name" value="Aldehyde_DH_dom"/>
</dbReference>
<dbReference type="NCBIfam" id="NF006916">
    <property type="entry name" value="PRK09407.1"/>
    <property type="match status" value="1"/>
</dbReference>
<dbReference type="PANTHER" id="PTHR11699">
    <property type="entry name" value="ALDEHYDE DEHYDROGENASE-RELATED"/>
    <property type="match status" value="1"/>
</dbReference>
<dbReference type="Pfam" id="PF00171">
    <property type="entry name" value="Aldedh"/>
    <property type="match status" value="1"/>
</dbReference>
<dbReference type="SUPFAM" id="SSF53720">
    <property type="entry name" value="ALDH-like"/>
    <property type="match status" value="1"/>
</dbReference>
<dbReference type="PROSITE" id="PS00687">
    <property type="entry name" value="ALDEHYDE_DEHYDR_GLU"/>
    <property type="match status" value="1"/>
</dbReference>
<proteinExistence type="inferred from homology"/>
<feature type="chain" id="PRO_0000310713" description="Putative succinate-semialdehyde dehydrogenase [NADP(+)] 2">
    <location>
        <begin position="1"/>
        <end position="518"/>
    </location>
</feature>
<feature type="active site" description="Proton acceptor" evidence="2">
    <location>
        <position position="254"/>
    </location>
</feature>
<feature type="active site" description="Nucleophile" evidence="2">
    <location>
        <position position="288"/>
    </location>
</feature>
<feature type="binding site" evidence="1">
    <location>
        <begin position="157"/>
        <end position="158"/>
    </location>
    <ligand>
        <name>NADP(+)</name>
        <dbReference type="ChEBI" id="CHEBI:58349"/>
    </ligand>
</feature>
<feature type="binding site" evidence="1">
    <location>
        <begin position="181"/>
        <end position="184"/>
    </location>
    <ligand>
        <name>NADP(+)</name>
        <dbReference type="ChEBI" id="CHEBI:58349"/>
    </ligand>
</feature>
<feature type="binding site" evidence="1">
    <location>
        <begin position="232"/>
        <end position="233"/>
    </location>
    <ligand>
        <name>NADP(+)</name>
        <dbReference type="ChEBI" id="CHEBI:58349"/>
    </ligand>
</feature>
<feature type="binding site" evidence="1">
    <location>
        <position position="255"/>
    </location>
    <ligand>
        <name>NADP(+)</name>
        <dbReference type="ChEBI" id="CHEBI:58349"/>
    </ligand>
</feature>
<feature type="binding site" evidence="1">
    <location>
        <position position="386"/>
    </location>
    <ligand>
        <name>NADP(+)</name>
        <dbReference type="ChEBI" id="CHEBI:58349"/>
    </ligand>
</feature>
<organism>
    <name type="scientific">Mycobacterium ulcerans (strain Agy99)</name>
    <dbReference type="NCBI Taxonomy" id="362242"/>
    <lineage>
        <taxon>Bacteria</taxon>
        <taxon>Bacillati</taxon>
        <taxon>Actinomycetota</taxon>
        <taxon>Actinomycetes</taxon>
        <taxon>Mycobacteriales</taxon>
        <taxon>Mycobacteriaceae</taxon>
        <taxon>Mycobacterium</taxon>
        <taxon>Mycobacterium ulcerans group</taxon>
    </lineage>
</organism>
<sequence length="518" mass="55236">MPVPSSAVFECLLSLAAIKDVDARPTRTIDEVFTGKPLTTIPVGTAEDVEAAFAEAREAQANWAKRPVSERAEVIRRYRDLVIENREFLMDLLQAEAGKARWAAQEEVVDLVANANYYARVSAGLLKPRTVQALLPGIGKTTVGYQPKGVVGVISPWNYPMTLTASDSVPALIAGNAVVLKPDSQTPYCALACAELLYRAGLPRALYAIVPGPGSVVGTAIADNCDYLMFTGSSATGSRLAERAGRRLIGFSAELGGKNAMIVTRGVNLDKVAKAATRACFSNAGQLCISIERIYVEKDIADEFTRKFGDAVRSMKLGTAYDFSVDMGSLISEGQLKTVSGHVDDATAKGAKVIAGGKARPDVGPLFYEPTVLTDVTHEMECADNETFGPLVSIYPVADVEEAVEKANDTEYGLNASVWAGSTPEGEKIAARLRSGTVNVNEGYAFAWGSLSAPMGGMGISGVGRRHGPEGLLKYTESQTIATARVFNLDPPMGVPPTLWQKSLLPIVRTVMKLPGRK</sequence>
<gene>
    <name type="primary">gabD2</name>
    <name type="ordered locus">MUL_3190</name>
</gene>
<protein>
    <recommendedName>
        <fullName>Putative succinate-semialdehyde dehydrogenase [NADP(+)] 2</fullName>
        <shortName>SSADH 2</shortName>
        <shortName>SSDH 2</shortName>
        <ecNumber>1.2.1.79</ecNumber>
    </recommendedName>
</protein>
<evidence type="ECO:0000250" key="1"/>
<evidence type="ECO:0000255" key="2">
    <source>
        <dbReference type="PROSITE-ProRule" id="PRU10007"/>
    </source>
</evidence>
<evidence type="ECO:0000305" key="3"/>
<reference key="1">
    <citation type="journal article" date="2007" name="Genome Res.">
        <title>Reductive evolution and niche adaptation inferred from the genome of Mycobacterium ulcerans, the causative agent of Buruli ulcer.</title>
        <authorList>
            <person name="Stinear T.P."/>
            <person name="Seemann T."/>
            <person name="Pidot S."/>
            <person name="Frigui W."/>
            <person name="Reysset G."/>
            <person name="Garnier T."/>
            <person name="Meurice G."/>
            <person name="Simon D."/>
            <person name="Bouchier C."/>
            <person name="Ma L."/>
            <person name="Tichit M."/>
            <person name="Porter J.L."/>
            <person name="Ryan J."/>
            <person name="Johnson P.D.R."/>
            <person name="Davies J.K."/>
            <person name="Jenkin G.A."/>
            <person name="Small P.L.C."/>
            <person name="Jones L.M."/>
            <person name="Tekaia F."/>
            <person name="Laval F."/>
            <person name="Daffe M."/>
            <person name="Parkhill J."/>
            <person name="Cole S.T."/>
        </authorList>
    </citation>
    <scope>NUCLEOTIDE SEQUENCE [LARGE SCALE GENOMIC DNA]</scope>
    <source>
        <strain>Agy99</strain>
    </source>
</reference>
<accession>A0PST9</accession>
<name>GABD2_MYCUA</name>
<comment type="function">
    <text evidence="1">Catalyzes the NADP(+)-dependent oxidation of succinate semialdehyde to succinate. Although it has succinate semialdehyde dehydrogenase activity, is likely to act physiologically on a different aldehyde(s) (By similarity).</text>
</comment>
<comment type="catalytic activity">
    <reaction>
        <text>succinate semialdehyde + NADP(+) + H2O = succinate + NADPH + 2 H(+)</text>
        <dbReference type="Rhea" id="RHEA:13213"/>
        <dbReference type="ChEBI" id="CHEBI:15377"/>
        <dbReference type="ChEBI" id="CHEBI:15378"/>
        <dbReference type="ChEBI" id="CHEBI:30031"/>
        <dbReference type="ChEBI" id="CHEBI:57706"/>
        <dbReference type="ChEBI" id="CHEBI:57783"/>
        <dbReference type="ChEBI" id="CHEBI:58349"/>
        <dbReference type="EC" id="1.2.1.79"/>
    </reaction>
</comment>
<comment type="similarity">
    <text evidence="3">Belongs to the aldehyde dehydrogenase family.</text>
</comment>
<keyword id="KW-0521">NADP</keyword>
<keyword id="KW-0560">Oxidoreductase</keyword>